<proteinExistence type="evidence at protein level"/>
<organism>
    <name type="scientific">Mycobacterium tuberculosis (strain ATCC 25618 / H37Rv)</name>
    <dbReference type="NCBI Taxonomy" id="83332"/>
    <lineage>
        <taxon>Bacteria</taxon>
        <taxon>Bacillati</taxon>
        <taxon>Actinomycetota</taxon>
        <taxon>Actinomycetes</taxon>
        <taxon>Mycobacteriales</taxon>
        <taxon>Mycobacteriaceae</taxon>
        <taxon>Mycobacterium</taxon>
        <taxon>Mycobacterium tuberculosis complex</taxon>
    </lineage>
</organism>
<sequence length="361" mass="36411">MIGFAPVSTPDAAAEAAARARQDSLTKPRGALGSLEDLSVWVASCQQRCPPRQFERARVVVFAGDHGVARSGVSAYPPEVTAQMVANIDAGGAAINALADVAGATVRVADLAVDADPLSERIGAHKVRRGSGNIATEDALTNDETAAAITAGQQIADEEVDAGADLLIAGDMGIGNTTAAAVLVAALTDAEPVAVVGFGTGIDDAGWARKTAAVRDALFRVRPVLPDPVGLLRCAGGADLAAIAGFCAQAAVRRTPLLLDGVAVTAAALVAERLAPGAHRWWQAGHRSSEPGHGLALAALGLDPIVDLHMRLGEGTGAAVALMVLRAAVAALSSMATFTEAGVSTRSVDGVDRTAPPAVSP</sequence>
<reference key="1">
    <citation type="journal article" date="1998" name="Nature">
        <title>Deciphering the biology of Mycobacterium tuberculosis from the complete genome sequence.</title>
        <authorList>
            <person name="Cole S.T."/>
            <person name="Brosch R."/>
            <person name="Parkhill J."/>
            <person name="Garnier T."/>
            <person name="Churcher C.M."/>
            <person name="Harris D.E."/>
            <person name="Gordon S.V."/>
            <person name="Eiglmeier K."/>
            <person name="Gas S."/>
            <person name="Barry C.E. III"/>
            <person name="Tekaia F."/>
            <person name="Badcock K."/>
            <person name="Basham D."/>
            <person name="Brown D."/>
            <person name="Chillingworth T."/>
            <person name="Connor R."/>
            <person name="Davies R.M."/>
            <person name="Devlin K."/>
            <person name="Feltwell T."/>
            <person name="Gentles S."/>
            <person name="Hamlin N."/>
            <person name="Holroyd S."/>
            <person name="Hornsby T."/>
            <person name="Jagels K."/>
            <person name="Krogh A."/>
            <person name="McLean J."/>
            <person name="Moule S."/>
            <person name="Murphy L.D."/>
            <person name="Oliver S."/>
            <person name="Osborne J."/>
            <person name="Quail M.A."/>
            <person name="Rajandream M.A."/>
            <person name="Rogers J."/>
            <person name="Rutter S."/>
            <person name="Seeger K."/>
            <person name="Skelton S."/>
            <person name="Squares S."/>
            <person name="Squares R."/>
            <person name="Sulston J.E."/>
            <person name="Taylor K."/>
            <person name="Whitehead S."/>
            <person name="Barrell B.G."/>
        </authorList>
    </citation>
    <scope>NUCLEOTIDE SEQUENCE [LARGE SCALE GENOMIC DNA]</scope>
    <source>
        <strain>ATCC 25618 / H37Rv</strain>
    </source>
</reference>
<reference key="2">
    <citation type="journal article" date="2011" name="Mol. Cell. Proteomics">
        <title>Proteogenomic analysis of Mycobacterium tuberculosis by high resolution mass spectrometry.</title>
        <authorList>
            <person name="Kelkar D.S."/>
            <person name="Kumar D."/>
            <person name="Kumar P."/>
            <person name="Balakrishnan L."/>
            <person name="Muthusamy B."/>
            <person name="Yadav A.K."/>
            <person name="Shrivastava P."/>
            <person name="Marimuthu A."/>
            <person name="Anand S."/>
            <person name="Sundaram H."/>
            <person name="Kingsbury R."/>
            <person name="Harsha H.C."/>
            <person name="Nair B."/>
            <person name="Prasad T.S."/>
            <person name="Chauhan D.S."/>
            <person name="Katoch K."/>
            <person name="Katoch V.M."/>
            <person name="Kumar P."/>
            <person name="Chaerkady R."/>
            <person name="Ramachandran S."/>
            <person name="Dash D."/>
            <person name="Pandey A."/>
        </authorList>
    </citation>
    <scope>IDENTIFICATION BY MASS SPECTROMETRY [LARGE SCALE ANALYSIS]</scope>
    <source>
        <strain>ATCC 25618 / H37Rv</strain>
    </source>
</reference>
<comment type="function">
    <text evidence="1">Catalyzes the synthesis of alpha-ribazole-5'-phosphate from nicotinate mononucleotide (NAMN) and 5,6-dimethylbenzimidazole (DMB).</text>
</comment>
<comment type="catalytic activity">
    <reaction>
        <text>5,6-dimethylbenzimidazole + nicotinate beta-D-ribonucleotide = alpha-ribazole 5'-phosphate + nicotinate + H(+)</text>
        <dbReference type="Rhea" id="RHEA:11196"/>
        <dbReference type="ChEBI" id="CHEBI:15378"/>
        <dbReference type="ChEBI" id="CHEBI:15890"/>
        <dbReference type="ChEBI" id="CHEBI:32544"/>
        <dbReference type="ChEBI" id="CHEBI:57502"/>
        <dbReference type="ChEBI" id="CHEBI:57918"/>
        <dbReference type="EC" id="2.4.2.21"/>
    </reaction>
</comment>
<comment type="pathway">
    <text>Nucleoside biosynthesis; alpha-ribazole biosynthesis; alpha-ribazole from 5,6-dimethylbenzimidazole: step 1/2.</text>
</comment>
<comment type="similarity">
    <text evidence="2">Belongs to the CobT family.</text>
</comment>
<keyword id="KW-0169">Cobalamin biosynthesis</keyword>
<keyword id="KW-0328">Glycosyltransferase</keyword>
<keyword id="KW-1185">Reference proteome</keyword>
<keyword id="KW-0808">Transferase</keyword>
<protein>
    <recommendedName>
        <fullName>Nicotinate-nucleotide--dimethylbenzimidazole phosphoribosyltransferase</fullName>
        <shortName>NN:DBI PRT</shortName>
        <ecNumber>2.4.2.21</ecNumber>
    </recommendedName>
    <alternativeName>
        <fullName>N(1)-alpha-phosphoribosyltransferase</fullName>
    </alternativeName>
</protein>
<dbReference type="EC" id="2.4.2.21"/>
<dbReference type="EMBL" id="AL123456">
    <property type="protein sequence ID" value="CCP44984.1"/>
    <property type="molecule type" value="Genomic_DNA"/>
</dbReference>
<dbReference type="PIR" id="H70785">
    <property type="entry name" value="H70785"/>
</dbReference>
<dbReference type="RefSeq" id="NP_216723.1">
    <property type="nucleotide sequence ID" value="NC_000962.3"/>
</dbReference>
<dbReference type="RefSeq" id="WP_003411429.1">
    <property type="nucleotide sequence ID" value="NZ_NVQJ01000008.1"/>
</dbReference>
<dbReference type="SMR" id="P9WP85"/>
<dbReference type="FunCoup" id="P9WP85">
    <property type="interactions" value="132"/>
</dbReference>
<dbReference type="STRING" id="83332.Rv2207"/>
<dbReference type="PaxDb" id="83332-Rv2207"/>
<dbReference type="DNASU" id="887781"/>
<dbReference type="GeneID" id="45426183"/>
<dbReference type="GeneID" id="887781"/>
<dbReference type="KEGG" id="mtu:Rv2207"/>
<dbReference type="KEGG" id="mtv:RVBD_2207"/>
<dbReference type="TubercuList" id="Rv2207"/>
<dbReference type="eggNOG" id="COG2038">
    <property type="taxonomic scope" value="Bacteria"/>
</dbReference>
<dbReference type="InParanoid" id="P9WP85"/>
<dbReference type="OrthoDB" id="9781491at2"/>
<dbReference type="PhylomeDB" id="P9WP85"/>
<dbReference type="UniPathway" id="UPA00061">
    <property type="reaction ID" value="UER00516"/>
</dbReference>
<dbReference type="Proteomes" id="UP000001584">
    <property type="component" value="Chromosome"/>
</dbReference>
<dbReference type="GO" id="GO:0008939">
    <property type="term" value="F:nicotinate-nucleotide-dimethylbenzimidazole phosphoribosyltransferase activity"/>
    <property type="evidence" value="ECO:0007669"/>
    <property type="project" value="UniProtKB-UniRule"/>
</dbReference>
<dbReference type="GO" id="GO:0009236">
    <property type="term" value="P:cobalamin biosynthetic process"/>
    <property type="evidence" value="ECO:0007669"/>
    <property type="project" value="UniProtKB-KW"/>
</dbReference>
<dbReference type="CDD" id="cd02439">
    <property type="entry name" value="DMB-PRT_CobT"/>
    <property type="match status" value="1"/>
</dbReference>
<dbReference type="Gene3D" id="1.10.1610.10">
    <property type="match status" value="1"/>
</dbReference>
<dbReference type="Gene3D" id="3.40.50.10210">
    <property type="match status" value="1"/>
</dbReference>
<dbReference type="HAMAP" id="MF_00230">
    <property type="entry name" value="CobT"/>
    <property type="match status" value="1"/>
</dbReference>
<dbReference type="InterPro" id="IPR003200">
    <property type="entry name" value="Nict_dMeBzImd_PRibTrfase"/>
</dbReference>
<dbReference type="InterPro" id="IPR017846">
    <property type="entry name" value="Nict_dMeBzImd_PRibTrfase_bact"/>
</dbReference>
<dbReference type="InterPro" id="IPR023195">
    <property type="entry name" value="Nict_dMeBzImd_PRibTrfase_N"/>
</dbReference>
<dbReference type="InterPro" id="IPR036087">
    <property type="entry name" value="Nict_dMeBzImd_PRibTrfase_sf"/>
</dbReference>
<dbReference type="NCBIfam" id="TIGR03160">
    <property type="entry name" value="cobT_DBIPRT"/>
    <property type="match status" value="1"/>
</dbReference>
<dbReference type="NCBIfam" id="NF000996">
    <property type="entry name" value="PRK00105.1"/>
    <property type="match status" value="1"/>
</dbReference>
<dbReference type="PANTHER" id="PTHR43463">
    <property type="entry name" value="NICOTINATE-NUCLEOTIDE--DIMETHYLBENZIMIDAZOLE PHOSPHORIBOSYLTRANSFERASE"/>
    <property type="match status" value="1"/>
</dbReference>
<dbReference type="PANTHER" id="PTHR43463:SF1">
    <property type="entry name" value="NICOTINATE-NUCLEOTIDE--DIMETHYLBENZIMIDAZOLE PHOSPHORIBOSYLTRANSFERASE"/>
    <property type="match status" value="1"/>
</dbReference>
<dbReference type="Pfam" id="PF02277">
    <property type="entry name" value="DBI_PRT"/>
    <property type="match status" value="1"/>
</dbReference>
<dbReference type="SUPFAM" id="SSF52733">
    <property type="entry name" value="Nicotinate mononucleotide:5,6-dimethylbenzimidazole phosphoribosyltransferase (CobT)"/>
    <property type="match status" value="1"/>
</dbReference>
<name>COBT_MYCTU</name>
<feature type="chain" id="PRO_0000167056" description="Nicotinate-nucleotide--dimethylbenzimidazole phosphoribosyltransferase">
    <location>
        <begin position="1"/>
        <end position="361"/>
    </location>
</feature>
<feature type="active site" description="Proton acceptor" evidence="1">
    <location>
        <position position="314"/>
    </location>
</feature>
<gene>
    <name type="primary">cobT</name>
    <name type="ordered locus">Rv2207</name>
    <name type="ORF">MTCY190.18</name>
</gene>
<accession>P9WP85</accession>
<accession>L0T8X8</accession>
<accession>P63841</accession>
<accession>Q10396</accession>
<evidence type="ECO:0000250" key="1"/>
<evidence type="ECO:0000305" key="2"/>